<proteinExistence type="evidence at protein level"/>
<evidence type="ECO:0000250" key="1"/>
<evidence type="ECO:0000269" key="2">
    <source>
    </source>
</evidence>
<evidence type="ECO:0000269" key="3">
    <source>
    </source>
</evidence>
<evidence type="ECO:0000305" key="4"/>
<evidence type="ECO:0007829" key="5">
    <source>
        <dbReference type="PDB" id="8XMD"/>
    </source>
</evidence>
<name>NRPD7_ARATH</name>
<protein>
    <recommendedName>
        <fullName>DNA-directed RNA polymerase IV subunit 7</fullName>
    </recommendedName>
</protein>
<organism>
    <name type="scientific">Arabidopsis thaliana</name>
    <name type="common">Mouse-ear cress</name>
    <dbReference type="NCBI Taxonomy" id="3702"/>
    <lineage>
        <taxon>Eukaryota</taxon>
        <taxon>Viridiplantae</taxon>
        <taxon>Streptophyta</taxon>
        <taxon>Embryophyta</taxon>
        <taxon>Tracheophyta</taxon>
        <taxon>Spermatophyta</taxon>
        <taxon>Magnoliopsida</taxon>
        <taxon>eudicotyledons</taxon>
        <taxon>Gunneridae</taxon>
        <taxon>Pentapetalae</taxon>
        <taxon>rosids</taxon>
        <taxon>malvids</taxon>
        <taxon>Brassicales</taxon>
        <taxon>Brassicaceae</taxon>
        <taxon>Camelineae</taxon>
        <taxon>Arabidopsis</taxon>
    </lineage>
</organism>
<reference key="1">
    <citation type="journal article" date="2000" name="DNA Res.">
        <title>Structural analysis of Arabidopsis thaliana chromosome 3. II. Sequence features of the 4,251,695 bp regions covered by 90 P1, TAC and BAC clones.</title>
        <authorList>
            <person name="Kaneko T."/>
            <person name="Katoh T."/>
            <person name="Sato S."/>
            <person name="Nakamura Y."/>
            <person name="Asamizu E."/>
            <person name="Tabata S."/>
        </authorList>
    </citation>
    <scope>NUCLEOTIDE SEQUENCE [LARGE SCALE GENOMIC DNA]</scope>
    <source>
        <strain>cv. Columbia</strain>
    </source>
</reference>
<reference key="2">
    <citation type="journal article" date="2017" name="Plant J.">
        <title>Araport11: a complete reannotation of the Arabidopsis thaliana reference genome.</title>
        <authorList>
            <person name="Cheng C.Y."/>
            <person name="Krishnakumar V."/>
            <person name="Chan A.P."/>
            <person name="Thibaud-Nissen F."/>
            <person name="Schobel S."/>
            <person name="Town C.D."/>
        </authorList>
    </citation>
    <scope>GENOME REANNOTATION</scope>
    <source>
        <strain>cv. Columbia</strain>
    </source>
</reference>
<reference key="3">
    <citation type="submission" date="2002-03" db="EMBL/GenBank/DDBJ databases">
        <title>Full-length cDNA from Arabidopsis thaliana.</title>
        <authorList>
            <person name="Brover V.V."/>
            <person name="Troukhan M.E."/>
            <person name="Alexandrov N.A."/>
            <person name="Lu Y.-P."/>
            <person name="Flavell R.B."/>
            <person name="Feldmann K.A."/>
        </authorList>
    </citation>
    <scope>NUCLEOTIDE SEQUENCE [LARGE SCALE MRNA]</scope>
</reference>
<reference key="4">
    <citation type="journal article" date="2009" name="Mol. Cell">
        <title>Subunit compositions of the RNA-silencing enzymes Pol IV and Pol V reveal their origins as specialized forms of RNA polymerase II.</title>
        <authorList>
            <person name="Ream T.S."/>
            <person name="Haag J.R."/>
            <person name="Wierzbicki A.T."/>
            <person name="Nicora C.D."/>
            <person name="Norbeck A.D."/>
            <person name="Zhu J.K."/>
            <person name="Hagen G."/>
            <person name="Guilfoyle T.J."/>
            <person name="Pasa-Tolic L."/>
            <person name="Pikaard C.S."/>
        </authorList>
    </citation>
    <scope>FUNCTION</scope>
    <scope>IDENTIFICATION BY MASS SPECTROMETRY</scope>
    <scope>SUBUNIT</scope>
    <scope>NOMENCLATURE</scope>
</reference>
<reference key="5">
    <citation type="journal article" date="2011" name="PLoS Genet.">
        <title>SHH1, a homeodomain protein required for DNA methylation, as well as RDR2, RDM4, and chromatin remodeling factors, associate with RNA polymerase IV.</title>
        <authorList>
            <person name="Law J.A."/>
            <person name="Vashisht A.A."/>
            <person name="Wohlschlegel J.A."/>
            <person name="Jacobsen S.E."/>
        </authorList>
    </citation>
    <scope>IDENTIFICATION BY MASS SPECTROMETRY</scope>
    <scope>INTERACTION WITH NRPD1</scope>
    <scope>SUBUNIT</scope>
</reference>
<comment type="function">
    <text evidence="2">DNA-dependent RNA polymerase catalyzes the transcription of DNA into RNA using the four ribonucleoside triphosphates as substrates. Component of RNA polymerase IV which mediates 24-nt short-interfering RNAs (siRNA) accumulation. Implicated in siRNA-directed heterochromatin formation through the action of DCL3 and AGO4, and subsequent DNA methylation-dependent silencing of targeted sequences. Essential component of a self-reinforcing loop coupling de novo DNA methylation to siRNA production. Required for intercellular but not intracellular RNA interference (RNAi) leading to systemic post-transcriptional gene silencing. Involved in the maintenance of post-transcriptional RNA silencing.</text>
</comment>
<comment type="subunit">
    <text evidence="2 3">Component of the RNA polymerase IV complex. Interacts with NRPD1.</text>
</comment>
<comment type="subcellular location">
    <subcellularLocation>
        <location evidence="1">Nucleus</location>
    </subcellularLocation>
</comment>
<comment type="similarity">
    <text evidence="4">Belongs to the eukaryotic RPB7/RPC8 RNA polymerase subunit family.</text>
</comment>
<comment type="sequence caution" evidence="4">
    <conflict type="erroneous initiation">
        <sequence resource="EMBL-CDS" id="BAB03035"/>
    </conflict>
    <text>Truncated N-terminus.</text>
</comment>
<sequence length="174" mass="19849">MFIKVKLPWDVTIPAEDMDTGLMLQRAIVIRLLEAFSKEKATKDLGYLITPTILENIGEGKIKEQTGEIQFPVVFNGICFKMFKGEIVHGVVHKVHKTGVFLKSGPYEIIYLSHMKMPGYEFIPGENPFFMNQYMSRIQIGARVRFVVLDTEWREAEKDFMALASIDGDNLGPF</sequence>
<accession>Q8LE42</accession>
<accession>Q9LIK8</accession>
<feature type="chain" id="PRO_0000423333" description="DNA-directed RNA polymerase IV subunit 7">
    <location>
        <begin position="1"/>
        <end position="174"/>
    </location>
</feature>
<feature type="strand" evidence="5">
    <location>
        <begin position="6"/>
        <end position="14"/>
    </location>
</feature>
<feature type="helix" evidence="5">
    <location>
        <begin position="21"/>
        <end position="23"/>
    </location>
</feature>
<feature type="helix" evidence="5">
    <location>
        <begin position="24"/>
        <end position="39"/>
    </location>
</feature>
<feature type="strand" evidence="5">
    <location>
        <begin position="43"/>
        <end position="45"/>
    </location>
</feature>
<feature type="strand" evidence="5">
    <location>
        <begin position="53"/>
        <end position="57"/>
    </location>
</feature>
<feature type="strand" evidence="5">
    <location>
        <begin position="61"/>
        <end position="63"/>
    </location>
</feature>
<feature type="turn" evidence="5">
    <location>
        <begin position="64"/>
        <end position="67"/>
    </location>
</feature>
<feature type="strand" evidence="5">
    <location>
        <begin position="68"/>
        <end position="76"/>
    </location>
</feature>
<feature type="strand" evidence="5">
    <location>
        <begin position="87"/>
        <end position="92"/>
    </location>
</feature>
<feature type="strand" evidence="5">
    <location>
        <begin position="97"/>
        <end position="105"/>
    </location>
</feature>
<feature type="strand" evidence="5">
    <location>
        <begin position="110"/>
        <end position="112"/>
    </location>
</feature>
<feature type="strand" evidence="5">
    <location>
        <begin position="125"/>
        <end position="128"/>
    </location>
</feature>
<feature type="helix" evidence="5">
    <location>
        <begin position="132"/>
        <end position="134"/>
    </location>
</feature>
<feature type="strand" evidence="5">
    <location>
        <begin position="143"/>
        <end position="148"/>
    </location>
</feature>
<feature type="strand" evidence="5">
    <location>
        <begin position="155"/>
        <end position="157"/>
    </location>
</feature>
<feature type="strand" evidence="5">
    <location>
        <begin position="161"/>
        <end position="165"/>
    </location>
</feature>
<feature type="strand" evidence="5">
    <location>
        <begin position="168"/>
        <end position="170"/>
    </location>
</feature>
<keyword id="KW-0002">3D-structure</keyword>
<keyword id="KW-0240">DNA-directed RNA polymerase</keyword>
<keyword id="KW-0539">Nucleus</keyword>
<keyword id="KW-1185">Reference proteome</keyword>
<keyword id="KW-0804">Transcription</keyword>
<gene>
    <name type="primary">NRPD7</name>
    <name type="ordered locus">At3g22900</name>
</gene>
<dbReference type="EMBL" id="AP001300">
    <property type="protein sequence ID" value="BAB03035.1"/>
    <property type="status" value="ALT_INIT"/>
    <property type="molecule type" value="Genomic_DNA"/>
</dbReference>
<dbReference type="EMBL" id="CP002686">
    <property type="protein sequence ID" value="AEE76689.1"/>
    <property type="molecule type" value="Genomic_DNA"/>
</dbReference>
<dbReference type="EMBL" id="CP002686">
    <property type="protein sequence ID" value="ANM64801.1"/>
    <property type="molecule type" value="Genomic_DNA"/>
</dbReference>
<dbReference type="EMBL" id="AY085637">
    <property type="protein sequence ID" value="AAM62858.1"/>
    <property type="molecule type" value="mRNA"/>
</dbReference>
<dbReference type="RefSeq" id="NP_001326806.1">
    <property type="nucleotide sequence ID" value="NM_001338603.1"/>
</dbReference>
<dbReference type="RefSeq" id="NP_566719.1">
    <property type="nucleotide sequence ID" value="NM_113190.3"/>
</dbReference>
<dbReference type="PDB" id="8XMB">
    <property type="method" value="EM"/>
    <property type="resolution" value="3.40 A"/>
    <property type="chains" value="G=1-174"/>
</dbReference>
<dbReference type="PDB" id="8XMC">
    <property type="method" value="EM"/>
    <property type="resolution" value="3.10 A"/>
    <property type="chains" value="G=1-174"/>
</dbReference>
<dbReference type="PDB" id="8XMD">
    <property type="method" value="EM"/>
    <property type="resolution" value="3.40 A"/>
    <property type="chains" value="G=1-174"/>
</dbReference>
<dbReference type="PDB" id="8XME">
    <property type="method" value="EM"/>
    <property type="resolution" value="3.10 A"/>
    <property type="chains" value="G=1-174"/>
</dbReference>
<dbReference type="PDBsum" id="8XMB"/>
<dbReference type="PDBsum" id="8XMC"/>
<dbReference type="PDBsum" id="8XMD"/>
<dbReference type="PDBsum" id="8XME"/>
<dbReference type="EMDB" id="EMD-38470"/>
<dbReference type="EMDB" id="EMD-38471"/>
<dbReference type="EMDB" id="EMD-38472"/>
<dbReference type="EMDB" id="EMD-38473"/>
<dbReference type="SMR" id="Q8LE42"/>
<dbReference type="BioGRID" id="7194">
    <property type="interactions" value="1"/>
</dbReference>
<dbReference type="STRING" id="3702.Q8LE42"/>
<dbReference type="PaxDb" id="3702-AT3G22900.1"/>
<dbReference type="ProteomicsDB" id="250479"/>
<dbReference type="EnsemblPlants" id="AT3G22900.1">
    <property type="protein sequence ID" value="AT3G22900.1"/>
    <property type="gene ID" value="AT3G22900"/>
</dbReference>
<dbReference type="EnsemblPlants" id="AT3G22900.2">
    <property type="protein sequence ID" value="AT3G22900.2"/>
    <property type="gene ID" value="AT3G22900"/>
</dbReference>
<dbReference type="GeneID" id="821862"/>
<dbReference type="Gramene" id="AT3G22900.1">
    <property type="protein sequence ID" value="AT3G22900.1"/>
    <property type="gene ID" value="AT3G22900"/>
</dbReference>
<dbReference type="Gramene" id="AT3G22900.2">
    <property type="protein sequence ID" value="AT3G22900.2"/>
    <property type="gene ID" value="AT3G22900"/>
</dbReference>
<dbReference type="KEGG" id="ath:AT3G22900"/>
<dbReference type="Araport" id="AT3G22900"/>
<dbReference type="TAIR" id="AT3G22900">
    <property type="gene designation" value="NRPD7"/>
</dbReference>
<dbReference type="eggNOG" id="KOG3298">
    <property type="taxonomic scope" value="Eukaryota"/>
</dbReference>
<dbReference type="HOGENOM" id="CLU_085878_3_0_1"/>
<dbReference type="InParanoid" id="Q8LE42"/>
<dbReference type="OMA" id="VFNGICF"/>
<dbReference type="OrthoDB" id="1162399at2759"/>
<dbReference type="PhylomeDB" id="Q8LE42"/>
<dbReference type="PRO" id="PR:Q8LE42"/>
<dbReference type="Proteomes" id="UP000006548">
    <property type="component" value="Chromosome 3"/>
</dbReference>
<dbReference type="ExpressionAtlas" id="Q8LE42">
    <property type="expression patterns" value="baseline and differential"/>
</dbReference>
<dbReference type="GO" id="GO:0000418">
    <property type="term" value="C:RNA polymerase IV complex"/>
    <property type="evidence" value="ECO:0000314"/>
    <property type="project" value="UniProtKB"/>
</dbReference>
<dbReference type="GO" id="GO:0006352">
    <property type="term" value="P:DNA-templated transcription initiation"/>
    <property type="evidence" value="ECO:0007669"/>
    <property type="project" value="InterPro"/>
</dbReference>
<dbReference type="CDD" id="cd04329">
    <property type="entry name" value="RNAP_II_Rpb7_N"/>
    <property type="match status" value="1"/>
</dbReference>
<dbReference type="FunFam" id="2.40.50.140:FF:000043">
    <property type="entry name" value="DNA-directed RNA polymerase II subunit RPB7"/>
    <property type="match status" value="1"/>
</dbReference>
<dbReference type="FunFam" id="3.30.1490.120:FF:000001">
    <property type="entry name" value="DNA-directed RNA polymerase II subunit RPB7"/>
    <property type="match status" value="1"/>
</dbReference>
<dbReference type="Gene3D" id="2.40.50.140">
    <property type="entry name" value="Nucleic acid-binding proteins"/>
    <property type="match status" value="1"/>
</dbReference>
<dbReference type="Gene3D" id="3.30.1490.120">
    <property type="entry name" value="RNA polymerase Rpb7-like, N-terminal domain"/>
    <property type="match status" value="1"/>
</dbReference>
<dbReference type="InterPro" id="IPR012340">
    <property type="entry name" value="NA-bd_OB-fold"/>
</dbReference>
<dbReference type="InterPro" id="IPR036898">
    <property type="entry name" value="RNA_pol_Rpb7-like_N_sf"/>
</dbReference>
<dbReference type="InterPro" id="IPR045113">
    <property type="entry name" value="Rpb7-like"/>
</dbReference>
<dbReference type="InterPro" id="IPR005576">
    <property type="entry name" value="Rpb7-like_N"/>
</dbReference>
<dbReference type="PANTHER" id="PTHR12709">
    <property type="entry name" value="DNA-DIRECTED RNA POLYMERASE II, III"/>
    <property type="match status" value="1"/>
</dbReference>
<dbReference type="PANTHER" id="PTHR12709:SF7">
    <property type="entry name" value="DNA-DIRECTED RNA POLYMERASE IV SUBUNIT 7"/>
    <property type="match status" value="1"/>
</dbReference>
<dbReference type="Pfam" id="PF03876">
    <property type="entry name" value="SHS2_Rpb7-N"/>
    <property type="match status" value="1"/>
</dbReference>
<dbReference type="SUPFAM" id="SSF88798">
    <property type="entry name" value="N-terminal, heterodimerisation domain of RBP7 (RpoE)"/>
    <property type="match status" value="1"/>
</dbReference>
<dbReference type="SUPFAM" id="SSF50249">
    <property type="entry name" value="Nucleic acid-binding proteins"/>
    <property type="match status" value="1"/>
</dbReference>